<sequence>MSSSKFEEVINKIINDSPPGELREVYDDLIKITSENSKNTILDAIENYNVQNCIPIEVNGNSVIISKYNKEGAKFFDPVNSVIFSVNHLERKGLDIEPYEFTHAKIEKGQLKELHDKLHEYLLQSFPGDVSFAVYPVPEEISKISIIIVSTKYNPNNFWNGHWRSSYIYDLETRELSGQISTQVHYYEDGNVSFQSGKDINQSNVDDVVCTIRDIETNFENDLDLSFFDLNEKQFKALRRRLPVTRSKINWGSAIGSYRLGKNAAEGK</sequence>
<organism>
    <name type="scientific">Saccharomyces cerevisiae (strain ATCC 204508 / S288c)</name>
    <name type="common">Baker's yeast</name>
    <dbReference type="NCBI Taxonomy" id="559292"/>
    <lineage>
        <taxon>Eukaryota</taxon>
        <taxon>Fungi</taxon>
        <taxon>Dikarya</taxon>
        <taxon>Ascomycota</taxon>
        <taxon>Saccharomycotina</taxon>
        <taxon>Saccharomycetes</taxon>
        <taxon>Saccharomycetales</taxon>
        <taxon>Saccharomycetaceae</taxon>
        <taxon>Saccharomyces</taxon>
    </lineage>
</organism>
<feature type="initiator methionine" description="Removed" evidence="6">
    <location>
        <position position="1"/>
    </location>
</feature>
<feature type="chain" id="PRO_0000208646" description="F-actin-capping protein subunit alpha">
    <location>
        <begin position="2"/>
        <end position="268"/>
    </location>
</feature>
<feature type="modified residue" description="N-acetylserine" evidence="6">
    <location>
        <position position="2"/>
    </location>
</feature>
<feature type="modified residue" description="Phosphoserine" evidence="5">
    <location>
        <position position="17"/>
    </location>
</feature>
<comment type="function">
    <text>F-actin-capping proteins bind in a Ca(2+)-independent manner to the fast growing ends of actin filaments (barbed end) thereby blocking the exchange of subunits at these ends. Unlike other capping proteins (such as gelsolin and severin), these proteins do not sever actin filaments.</text>
</comment>
<comment type="subunit">
    <text evidence="3">Component of the F-actin capping complex, composed of a heterodimer of an alpha and a beta subunit (PubMed:38088874). Interacts with BSP1 (via C-terminus); leading to recruitment of the F-actin capping complex to actin cortical patches and the acomyosin contractile ring (PubMed:38088874).</text>
</comment>
<comment type="interaction">
    <interactant intactId="EBI-4003">
        <id>P28495</id>
    </interactant>
    <interactant intactId="EBI-4013">
        <id>P13517</id>
        <label>CAP2</label>
    </interactant>
    <organismsDiffer>false</organismsDiffer>
    <experiments>6</experiments>
</comment>
<comment type="subcellular location">
    <subcellularLocation>
        <location evidence="1">Cytoplasm</location>
    </subcellularLocation>
    <subcellularLocation>
        <location evidence="3">Cytoplasm</location>
        <location evidence="3">Cytoskeleton</location>
        <location evidence="3">Actin patch</location>
    </subcellularLocation>
    <subcellularLocation>
        <location evidence="3">Cytoplasm</location>
        <location evidence="3">Cytoskeleton</location>
    </subcellularLocation>
    <text evidence="3">Localizes to the actomyosin contractile ring.</text>
</comment>
<comment type="miscellaneous">
    <text evidence="2">Present with 4380 molecules/cell in log phase SD medium.</text>
</comment>
<comment type="similarity">
    <text evidence="4">Belongs to the F-actin-capping protein alpha subunit family.</text>
</comment>
<accession>P28495</accession>
<accession>D6VXS9</accession>
<dbReference type="EMBL" id="S59773">
    <property type="protein sequence ID" value="AAC60553.1"/>
    <property type="molecule type" value="Genomic_DNA"/>
</dbReference>
<dbReference type="EMBL" id="X61398">
    <property type="protein sequence ID" value="CAA43669.1"/>
    <property type="molecule type" value="Genomic_DNA"/>
</dbReference>
<dbReference type="EMBL" id="Z28007">
    <property type="protein sequence ID" value="CAA81841.1"/>
    <property type="molecule type" value="Genomic_DNA"/>
</dbReference>
<dbReference type="EMBL" id="AY558093">
    <property type="protein sequence ID" value="AAS56419.1"/>
    <property type="molecule type" value="Genomic_DNA"/>
</dbReference>
<dbReference type="EMBL" id="BK006944">
    <property type="protein sequence ID" value="DAA09149.1"/>
    <property type="molecule type" value="Genomic_DNA"/>
</dbReference>
<dbReference type="PIR" id="S30135">
    <property type="entry name" value="S30135"/>
</dbReference>
<dbReference type="RefSeq" id="NP_012918.1">
    <property type="nucleotide sequence ID" value="NM_001179573.1"/>
</dbReference>
<dbReference type="SMR" id="P28495"/>
<dbReference type="BioGRID" id="34125">
    <property type="interactions" value="151"/>
</dbReference>
<dbReference type="ComplexPortal" id="CPX-1637">
    <property type="entry name" value="F-actin capping protein complex"/>
</dbReference>
<dbReference type="DIP" id="DIP-2696N"/>
<dbReference type="FunCoup" id="P28495">
    <property type="interactions" value="1032"/>
</dbReference>
<dbReference type="IntAct" id="P28495">
    <property type="interactions" value="15"/>
</dbReference>
<dbReference type="MINT" id="P28495"/>
<dbReference type="STRING" id="4932.YKL007W"/>
<dbReference type="iPTMnet" id="P28495"/>
<dbReference type="PaxDb" id="4932-YKL007W"/>
<dbReference type="PeptideAtlas" id="P28495"/>
<dbReference type="EnsemblFungi" id="YKL007W_mRNA">
    <property type="protein sequence ID" value="YKL007W"/>
    <property type="gene ID" value="YKL007W"/>
</dbReference>
<dbReference type="GeneID" id="853862"/>
<dbReference type="KEGG" id="sce:YKL007W"/>
<dbReference type="AGR" id="SGD:S000001490"/>
<dbReference type="SGD" id="S000001490">
    <property type="gene designation" value="CAP1"/>
</dbReference>
<dbReference type="VEuPathDB" id="FungiDB:YKL007W"/>
<dbReference type="eggNOG" id="KOG0836">
    <property type="taxonomic scope" value="Eukaryota"/>
</dbReference>
<dbReference type="GeneTree" id="ENSGT00950000183119"/>
<dbReference type="HOGENOM" id="CLU_045161_3_0_1"/>
<dbReference type="InParanoid" id="P28495"/>
<dbReference type="OMA" id="VACIEDH"/>
<dbReference type="OrthoDB" id="340550at2759"/>
<dbReference type="BioCyc" id="YEAST:G3O-31817-MONOMER"/>
<dbReference type="Reactome" id="R-SCE-983231">
    <property type="pathway name" value="Factors involved in megakaryocyte development and platelet production"/>
</dbReference>
<dbReference type="BioGRID-ORCS" id="853862">
    <property type="hits" value="3 hits in 10 CRISPR screens"/>
</dbReference>
<dbReference type="PRO" id="PR:P28495"/>
<dbReference type="Proteomes" id="UP000002311">
    <property type="component" value="Chromosome XI"/>
</dbReference>
<dbReference type="RNAct" id="P28495">
    <property type="molecule type" value="protein"/>
</dbReference>
<dbReference type="GO" id="GO:0030479">
    <property type="term" value="C:actin cortical patch"/>
    <property type="evidence" value="ECO:0000314"/>
    <property type="project" value="SGD"/>
</dbReference>
<dbReference type="GO" id="GO:0015629">
    <property type="term" value="C:actin cytoskeleton"/>
    <property type="evidence" value="ECO:0000314"/>
    <property type="project" value="ComplexPortal"/>
</dbReference>
<dbReference type="GO" id="GO:0005935">
    <property type="term" value="C:cellular bud neck"/>
    <property type="evidence" value="ECO:0007005"/>
    <property type="project" value="SGD"/>
</dbReference>
<dbReference type="GO" id="GO:0005934">
    <property type="term" value="C:cellular bud tip"/>
    <property type="evidence" value="ECO:0000314"/>
    <property type="project" value="SGD"/>
</dbReference>
<dbReference type="GO" id="GO:0030863">
    <property type="term" value="C:cortical cytoskeleton"/>
    <property type="evidence" value="ECO:0000318"/>
    <property type="project" value="GO_Central"/>
</dbReference>
<dbReference type="GO" id="GO:0008290">
    <property type="term" value="C:F-actin capping protein complex"/>
    <property type="evidence" value="ECO:0000314"/>
    <property type="project" value="SGD"/>
</dbReference>
<dbReference type="GO" id="GO:0000131">
    <property type="term" value="C:incipient cellular bud site"/>
    <property type="evidence" value="ECO:0000314"/>
    <property type="project" value="SGD"/>
</dbReference>
<dbReference type="GO" id="GO:0043332">
    <property type="term" value="C:mating projection tip"/>
    <property type="evidence" value="ECO:0007005"/>
    <property type="project" value="SGD"/>
</dbReference>
<dbReference type="GO" id="GO:0110085">
    <property type="term" value="C:mitotic actomyosin contractile ring"/>
    <property type="evidence" value="ECO:0000314"/>
    <property type="project" value="SGD"/>
</dbReference>
<dbReference type="GO" id="GO:0005886">
    <property type="term" value="C:plasma membrane"/>
    <property type="evidence" value="ECO:0007005"/>
    <property type="project" value="SGD"/>
</dbReference>
<dbReference type="GO" id="GO:0051015">
    <property type="term" value="F:actin filament binding"/>
    <property type="evidence" value="ECO:0000315"/>
    <property type="project" value="SGD"/>
</dbReference>
<dbReference type="GO" id="GO:0030036">
    <property type="term" value="P:actin cytoskeleton organization"/>
    <property type="evidence" value="ECO:0000318"/>
    <property type="project" value="GO_Central"/>
</dbReference>
<dbReference type="GO" id="GO:0051016">
    <property type="term" value="P:barbed-end actin filament capping"/>
    <property type="evidence" value="ECO:0000314"/>
    <property type="project" value="SGD"/>
</dbReference>
<dbReference type="FunFam" id="3.90.1150.210:FF:000003">
    <property type="entry name" value="F-actin-capping protein subunit alpha"/>
    <property type="match status" value="1"/>
</dbReference>
<dbReference type="Gene3D" id="3.30.1140.60">
    <property type="entry name" value="F-actin capping protein, alpha subunit"/>
    <property type="match status" value="1"/>
</dbReference>
<dbReference type="Gene3D" id="3.90.1150.210">
    <property type="entry name" value="F-actin capping protein, beta subunit"/>
    <property type="match status" value="1"/>
</dbReference>
<dbReference type="InterPro" id="IPR002189">
    <property type="entry name" value="CapZ_alpha"/>
</dbReference>
<dbReference type="InterPro" id="IPR037282">
    <property type="entry name" value="CapZ_alpha/beta"/>
</dbReference>
<dbReference type="InterPro" id="IPR042276">
    <property type="entry name" value="CapZ_alpha/beta_2"/>
</dbReference>
<dbReference type="InterPro" id="IPR042489">
    <property type="entry name" value="CapZ_alpha_1"/>
</dbReference>
<dbReference type="InterPro" id="IPR017865">
    <property type="entry name" value="F-actin_cap_asu_CS"/>
</dbReference>
<dbReference type="PANTHER" id="PTHR10653">
    <property type="entry name" value="F-ACTIN-CAPPING PROTEIN SUBUNIT ALPHA"/>
    <property type="match status" value="1"/>
</dbReference>
<dbReference type="PANTHER" id="PTHR10653:SF0">
    <property type="entry name" value="F-ACTIN-CAPPING PROTEIN SUBUNIT ALPHA"/>
    <property type="match status" value="1"/>
</dbReference>
<dbReference type="Pfam" id="PF01267">
    <property type="entry name" value="F-actin_cap_A"/>
    <property type="match status" value="1"/>
</dbReference>
<dbReference type="PRINTS" id="PR00191">
    <property type="entry name" value="FACTINCAPA"/>
</dbReference>
<dbReference type="SUPFAM" id="SSF90096">
    <property type="entry name" value="Subunits of heterodimeric actin filament capping protein Capz"/>
    <property type="match status" value="1"/>
</dbReference>
<dbReference type="PROSITE" id="PS00748">
    <property type="entry name" value="F_ACTIN_CAPPING_A_1"/>
    <property type="match status" value="1"/>
</dbReference>
<dbReference type="PROSITE" id="PS00749">
    <property type="entry name" value="F_ACTIN_CAPPING_A_2"/>
    <property type="match status" value="1"/>
</dbReference>
<proteinExistence type="evidence at protein level"/>
<protein>
    <recommendedName>
        <fullName>F-actin-capping protein subunit alpha</fullName>
    </recommendedName>
</protein>
<keyword id="KW-0007">Acetylation</keyword>
<keyword id="KW-0117">Actin capping</keyword>
<keyword id="KW-0009">Actin-binding</keyword>
<keyword id="KW-0963">Cytoplasm</keyword>
<keyword id="KW-0206">Cytoskeleton</keyword>
<keyword id="KW-0903">Direct protein sequencing</keyword>
<keyword id="KW-0597">Phosphoprotein</keyword>
<keyword id="KW-1185">Reference proteome</keyword>
<gene>
    <name type="primary">CAP1</name>
    <name type="ordered locus">YKL007W</name>
    <name type="ORF">YKL155</name>
</gene>
<reference key="1">
    <citation type="journal article" date="1992" name="J. Cell Biol.">
        <title>Effects of null mutations and overexpression of capping protein on morphogenesis, actin distribution and polarized secretion in yeast.</title>
        <authorList>
            <person name="Amatruda J.F."/>
            <person name="Gattermeir D.J."/>
            <person name="Karpova T.S."/>
            <person name="Cooper J.A."/>
        </authorList>
    </citation>
    <scope>NUCLEOTIDE SEQUENCE [GENOMIC DNA]</scope>
    <scope>PARTIAL PROTEIN SEQUENCE</scope>
</reference>
<reference key="2">
    <citation type="journal article" date="1993" name="Yeast">
        <title>Sequence of a 7.8 kb segment on the left arm of yeast chromosome XI reveals four open reading frames, including the CAP1 gene, an intron-containing gene and a gene encoding a homolog to the mammalian UOG-1 gene.</title>
        <authorList>
            <person name="Boyer J."/>
            <person name="Pascolo S."/>
            <person name="Richard G.-F."/>
            <person name="Dujon B."/>
        </authorList>
    </citation>
    <scope>NUCLEOTIDE SEQUENCE [GENOMIC DNA]</scope>
</reference>
<reference key="3">
    <citation type="journal article" date="1994" name="Nature">
        <title>Complete DNA sequence of yeast chromosome XI.</title>
        <authorList>
            <person name="Dujon B."/>
            <person name="Alexandraki D."/>
            <person name="Andre B."/>
            <person name="Ansorge W."/>
            <person name="Baladron V."/>
            <person name="Ballesta J.P.G."/>
            <person name="Banrevi A."/>
            <person name="Bolle P.-A."/>
            <person name="Bolotin-Fukuhara M."/>
            <person name="Bossier P."/>
            <person name="Bou G."/>
            <person name="Boyer J."/>
            <person name="Buitrago M.J."/>
            <person name="Cheret G."/>
            <person name="Colleaux L."/>
            <person name="Daignan-Fornier B."/>
            <person name="del Rey F."/>
            <person name="Dion C."/>
            <person name="Domdey H."/>
            <person name="Duesterhoeft A."/>
            <person name="Duesterhus S."/>
            <person name="Entian K.-D."/>
            <person name="Erfle H."/>
            <person name="Esteban P.F."/>
            <person name="Feldmann H."/>
            <person name="Fernandes L."/>
            <person name="Fobo G.M."/>
            <person name="Fritz C."/>
            <person name="Fukuhara H."/>
            <person name="Gabel C."/>
            <person name="Gaillon L."/>
            <person name="Garcia-Cantalejo J.M."/>
            <person name="Garcia-Ramirez J.J."/>
            <person name="Gent M.E."/>
            <person name="Ghazvini M."/>
            <person name="Goffeau A."/>
            <person name="Gonzalez A."/>
            <person name="Grothues D."/>
            <person name="Guerreiro P."/>
            <person name="Hegemann J.H."/>
            <person name="Hewitt N."/>
            <person name="Hilger F."/>
            <person name="Hollenberg C.P."/>
            <person name="Horaitis O."/>
            <person name="Indge K.J."/>
            <person name="Jacquier A."/>
            <person name="James C.M."/>
            <person name="Jauniaux J.-C."/>
            <person name="Jimenez A."/>
            <person name="Keuchel H."/>
            <person name="Kirchrath L."/>
            <person name="Kleine K."/>
            <person name="Koetter P."/>
            <person name="Legrain P."/>
            <person name="Liebl S."/>
            <person name="Louis E.J."/>
            <person name="Maia e Silva A."/>
            <person name="Marck C."/>
            <person name="Monnier A.-L."/>
            <person name="Moestl D."/>
            <person name="Mueller S."/>
            <person name="Obermaier B."/>
            <person name="Oliver S.G."/>
            <person name="Pallier C."/>
            <person name="Pascolo S."/>
            <person name="Pfeiffer F."/>
            <person name="Philippsen P."/>
            <person name="Planta R.J."/>
            <person name="Pohl F.M."/>
            <person name="Pohl T.M."/>
            <person name="Poehlmann R."/>
            <person name="Portetelle D."/>
            <person name="Purnelle B."/>
            <person name="Puzos V."/>
            <person name="Ramezani Rad M."/>
            <person name="Rasmussen S.W."/>
            <person name="Remacha M.A."/>
            <person name="Revuelta J.L."/>
            <person name="Richard G.-F."/>
            <person name="Rieger M."/>
            <person name="Rodrigues-Pousada C."/>
            <person name="Rose M."/>
            <person name="Rupp T."/>
            <person name="Santos M.A."/>
            <person name="Schwager C."/>
            <person name="Sensen C."/>
            <person name="Skala J."/>
            <person name="Soares H."/>
            <person name="Sor F."/>
            <person name="Stegemann J."/>
            <person name="Tettelin H."/>
            <person name="Thierry A."/>
            <person name="Tzermia M."/>
            <person name="Urrestarazu L.A."/>
            <person name="van Dyck L."/>
            <person name="van Vliet-Reedijk J.C."/>
            <person name="Valens M."/>
            <person name="Vandenbol M."/>
            <person name="Vilela C."/>
            <person name="Vissers S."/>
            <person name="von Wettstein D."/>
            <person name="Voss H."/>
            <person name="Wiemann S."/>
            <person name="Xu G."/>
            <person name="Zimmermann J."/>
            <person name="Haasemann M."/>
            <person name="Becker I."/>
            <person name="Mewes H.-W."/>
        </authorList>
    </citation>
    <scope>NUCLEOTIDE SEQUENCE [LARGE SCALE GENOMIC DNA]</scope>
    <source>
        <strain>ATCC 204508 / S288c</strain>
    </source>
</reference>
<reference key="4">
    <citation type="journal article" date="2014" name="G3 (Bethesda)">
        <title>The reference genome sequence of Saccharomyces cerevisiae: Then and now.</title>
        <authorList>
            <person name="Engel S.R."/>
            <person name="Dietrich F.S."/>
            <person name="Fisk D.G."/>
            <person name="Binkley G."/>
            <person name="Balakrishnan R."/>
            <person name="Costanzo M.C."/>
            <person name="Dwight S.S."/>
            <person name="Hitz B.C."/>
            <person name="Karra K."/>
            <person name="Nash R.S."/>
            <person name="Weng S."/>
            <person name="Wong E.D."/>
            <person name="Lloyd P."/>
            <person name="Skrzypek M.S."/>
            <person name="Miyasato S.R."/>
            <person name="Simison M."/>
            <person name="Cherry J.M."/>
        </authorList>
    </citation>
    <scope>GENOME REANNOTATION</scope>
    <source>
        <strain>ATCC 204508 / S288c</strain>
    </source>
</reference>
<reference key="5">
    <citation type="journal article" date="2007" name="Genome Res.">
        <title>Approaching a complete repository of sequence-verified protein-encoding clones for Saccharomyces cerevisiae.</title>
        <authorList>
            <person name="Hu Y."/>
            <person name="Rolfs A."/>
            <person name="Bhullar B."/>
            <person name="Murthy T.V.S."/>
            <person name="Zhu C."/>
            <person name="Berger M.F."/>
            <person name="Camargo A.A."/>
            <person name="Kelley F."/>
            <person name="McCarron S."/>
            <person name="Jepson D."/>
            <person name="Richardson A."/>
            <person name="Raphael J."/>
            <person name="Moreira D."/>
            <person name="Taycher E."/>
            <person name="Zuo D."/>
            <person name="Mohr S."/>
            <person name="Kane M.F."/>
            <person name="Williamson J."/>
            <person name="Simpson A.J.G."/>
            <person name="Bulyk M.L."/>
            <person name="Harlow E."/>
            <person name="Marsischky G."/>
            <person name="Kolodner R.D."/>
            <person name="LaBaer J."/>
        </authorList>
    </citation>
    <scope>NUCLEOTIDE SEQUENCE [GENOMIC DNA]</scope>
    <source>
        <strain>ATCC 204508 / S288c</strain>
    </source>
</reference>
<reference key="6">
    <citation type="journal article" date="2003" name="Nature">
        <title>Global analysis of protein expression in yeast.</title>
        <authorList>
            <person name="Ghaemmaghami S."/>
            <person name="Huh W.-K."/>
            <person name="Bower K."/>
            <person name="Howson R.W."/>
            <person name="Belle A."/>
            <person name="Dephoure N."/>
            <person name="O'Shea E.K."/>
            <person name="Weissman J.S."/>
        </authorList>
    </citation>
    <scope>LEVEL OF PROTEIN EXPRESSION [LARGE SCALE ANALYSIS]</scope>
</reference>
<reference key="7">
    <citation type="journal article" date="2008" name="Mol. Cell. Proteomics">
        <title>A multidimensional chromatography technology for in-depth phosphoproteome analysis.</title>
        <authorList>
            <person name="Albuquerque C.P."/>
            <person name="Smolka M.B."/>
            <person name="Payne S.H."/>
            <person name="Bafna V."/>
            <person name="Eng J."/>
            <person name="Zhou H."/>
        </authorList>
    </citation>
    <scope>PHOSPHORYLATION [LARGE SCALE ANALYSIS] AT SER-17</scope>
    <scope>IDENTIFICATION BY MASS SPECTROMETRY [LARGE SCALE ANALYSIS]</scope>
</reference>
<reference key="8">
    <citation type="journal article" date="2012" name="Proc. Natl. Acad. Sci. U.S.A.">
        <title>N-terminal acetylome analyses and functional insights of the N-terminal acetyltransferase NatB.</title>
        <authorList>
            <person name="Van Damme P."/>
            <person name="Lasa M."/>
            <person name="Polevoda B."/>
            <person name="Gazquez C."/>
            <person name="Elosegui-Artola A."/>
            <person name="Kim D.S."/>
            <person name="De Juan-Pardo E."/>
            <person name="Demeyer K."/>
            <person name="Hole K."/>
            <person name="Larrea E."/>
            <person name="Timmerman E."/>
            <person name="Prieto J."/>
            <person name="Arnesen T."/>
            <person name="Sherman F."/>
            <person name="Gevaert K."/>
            <person name="Aldabe R."/>
        </authorList>
    </citation>
    <scope>ACETYLATION [LARGE SCALE ANALYSIS] AT SER-2</scope>
    <scope>CLEAVAGE OF INITIATOR METHIONINE [LARGE SCALE ANALYSIS]</scope>
    <scope>IDENTIFICATION BY MASS SPECTROMETRY [LARGE SCALE ANALYSIS]</scope>
</reference>
<reference key="9">
    <citation type="journal article" date="2024" name="Mol. Biol. Cell">
        <title>Bsp1, a fungal CPI motif protein, regulates actin filament capping in endocytosis and cytokinesis.</title>
        <authorList>
            <person name="Hummel D.R."/>
            <person name="Hakala M."/>
            <person name="Toret C.P."/>
            <person name="Kaksonen M."/>
        </authorList>
    </citation>
    <scope>IDENTIFICATION IN THE F-ACTIN CAPPING COMPLEX</scope>
    <scope>INTERACTION WITH BSP1</scope>
    <scope>SUBCELLULAR LOCATION</scope>
</reference>
<evidence type="ECO:0000250" key="1">
    <source>
        <dbReference type="UniProtKB" id="Q10434"/>
    </source>
</evidence>
<evidence type="ECO:0000269" key="2">
    <source>
    </source>
</evidence>
<evidence type="ECO:0000269" key="3">
    <source>
    </source>
</evidence>
<evidence type="ECO:0000305" key="4"/>
<evidence type="ECO:0007744" key="5">
    <source>
    </source>
</evidence>
<evidence type="ECO:0007744" key="6">
    <source>
    </source>
</evidence>
<name>CAPZA_YEAST</name>